<evidence type="ECO:0000250" key="1">
    <source>
        <dbReference type="UniProtKB" id="Q80SU3"/>
    </source>
</evidence>
<evidence type="ECO:0000255" key="2"/>
<evidence type="ECO:0000256" key="3">
    <source>
        <dbReference type="SAM" id="MobiDB-lite"/>
    </source>
</evidence>
<evidence type="ECO:0000269" key="4">
    <source>
    </source>
</evidence>
<evidence type="ECO:0000303" key="5">
    <source>
    </source>
</evidence>
<evidence type="ECO:0000305" key="6"/>
<evidence type="ECO:0000312" key="7">
    <source>
        <dbReference type="HGNC" id="HGNC:20436"/>
    </source>
</evidence>
<protein>
    <recommendedName>
        <fullName evidence="6">Zygote arrest protein 1</fullName>
    </recommendedName>
</protein>
<proteinExistence type="evidence at protein level"/>
<keyword id="KW-0963">Cytoplasm</keyword>
<keyword id="KW-0217">Developmental protein</keyword>
<keyword id="KW-0221">Differentiation</keyword>
<keyword id="KW-0479">Metal-binding</keyword>
<keyword id="KW-0896">Oogenesis</keyword>
<keyword id="KW-1267">Proteomics identification</keyword>
<keyword id="KW-1185">Reference proteome</keyword>
<keyword id="KW-0694">RNA-binding</keyword>
<keyword id="KW-0832">Ubl conjugation</keyword>
<keyword id="KW-0862">Zinc</keyword>
<keyword id="KW-0863">Zinc-finger</keyword>
<feature type="chain" id="PRO_0000187011" description="Zygote arrest protein 1">
    <location>
        <begin position="1"/>
        <end position="424"/>
    </location>
</feature>
<feature type="zinc finger region" description="3CxxC-type" evidence="2">
    <location>
        <begin position="326"/>
        <end position="409"/>
    </location>
</feature>
<feature type="region of interest" description="Disordered" evidence="3">
    <location>
        <begin position="125"/>
        <end position="175"/>
    </location>
</feature>
<feature type="region of interest" description="Disordered" evidence="3">
    <location>
        <begin position="196"/>
        <end position="313"/>
    </location>
</feature>
<feature type="compositionally biased region" description="Gly residues" evidence="3">
    <location>
        <begin position="141"/>
        <end position="150"/>
    </location>
</feature>
<feature type="compositionally biased region" description="Basic and acidic residues" evidence="3">
    <location>
        <begin position="289"/>
        <end position="298"/>
    </location>
</feature>
<reference key="1">
    <citation type="journal article" date="2003" name="Nat. Genet.">
        <title>Zygote arrest 1 (Zar1) is a novel maternal-effect gene critical for the oocyte-to-embryo transition.</title>
        <authorList>
            <person name="Wu X."/>
            <person name="Viveiros M.M."/>
            <person name="Eppig J.J."/>
            <person name="Bai Y."/>
            <person name="Fitzpatrick S.L."/>
            <person name="Matzuk M.M."/>
        </authorList>
    </citation>
    <scope>NUCLEOTIDE SEQUENCE [GENOMIC DNA / MRNA]</scope>
    <scope>TISSUE SPECIFICITY</scope>
</reference>
<reference key="2">
    <citation type="journal article" date="2003" name="Biol. Reprod.">
        <title>Zygote arrest 1 (Zar1) is an evolutionarily conserved gene expressed in vertebrate ovaries.</title>
        <authorList>
            <person name="Wu X."/>
            <person name="Wang P."/>
            <person name="Brown C.A."/>
            <person name="Zilinski C.A."/>
            <person name="Matzuk M.M."/>
        </authorList>
    </citation>
    <scope>NUCLEOTIDE SEQUENCE [MRNA]</scope>
</reference>
<gene>
    <name evidence="5 7" type="primary">ZAR1</name>
</gene>
<sequence>MAALGDEVLDGYVFPACPPCSYRYPYPAATKGKGAAGGSWQQRGRGCLPASSPCSAGAASLSFPGCGRLTAAEYFDSYQRERLMALLAQVGPGLGPRARRAGSCDVAVQVSPRIDAAVQCSLGRRTLQRRARDPESPAGPGAEGTTGGGSFSQQPSRRGLEQGSPQNGAPRPMRFPRTVAVYSPLALRRLTAFLEGPGPAAGEQRSGASDGERGPPPARLQGPEEGEVWTKKAPRRPQSDDDGEAQAAVRASWEQPADGPELPPREAQEGEAAPRSALRSPGQPPSAGRARDGGDGREAAVAGEGPSPRSPELGKERLRFQFLEQKYGYYHCKDCNIRWESAYVWCVQGTNKVYFKQFCRTCQKSYNPYRVEDITCQSCKQTRCSCPVKLRHVDPKRPHRQDLCGRCKGKRLSCDSTFSFKYII</sequence>
<dbReference type="EMBL" id="AY191416">
    <property type="protein sequence ID" value="AAO24707.1"/>
    <property type="molecule type" value="mRNA"/>
</dbReference>
<dbReference type="EMBL" id="AY193890">
    <property type="protein sequence ID" value="AAO24709.1"/>
    <property type="molecule type" value="Genomic_DNA"/>
</dbReference>
<dbReference type="CCDS" id="CCDS3483.1"/>
<dbReference type="RefSeq" id="NP_783318.1">
    <property type="nucleotide sequence ID" value="NM_175619.3"/>
</dbReference>
<dbReference type="BioGRID" id="130576">
    <property type="interactions" value="2"/>
</dbReference>
<dbReference type="FunCoup" id="Q86SH2">
    <property type="interactions" value="15"/>
</dbReference>
<dbReference type="IntAct" id="Q86SH2">
    <property type="interactions" value="1"/>
</dbReference>
<dbReference type="STRING" id="9606.ENSP00000329803"/>
<dbReference type="iPTMnet" id="Q86SH2"/>
<dbReference type="PhosphoSitePlus" id="Q86SH2"/>
<dbReference type="BioMuta" id="ZAR1"/>
<dbReference type="DMDM" id="45477298"/>
<dbReference type="MassIVE" id="Q86SH2"/>
<dbReference type="PaxDb" id="9606-ENSP00000329803"/>
<dbReference type="PeptideAtlas" id="Q86SH2"/>
<dbReference type="ProteomicsDB" id="69590"/>
<dbReference type="Antibodypedia" id="67975">
    <property type="antibodies" value="120 antibodies from 18 providers"/>
</dbReference>
<dbReference type="DNASU" id="326340"/>
<dbReference type="Ensembl" id="ENST00000327939.4">
    <property type="protein sequence ID" value="ENSP00000329803.4"/>
    <property type="gene ID" value="ENSG00000182223.7"/>
</dbReference>
<dbReference type="GeneID" id="326340"/>
<dbReference type="KEGG" id="hsa:326340"/>
<dbReference type="MANE-Select" id="ENST00000327939.4">
    <property type="protein sequence ID" value="ENSP00000329803.4"/>
    <property type="RefSeq nucleotide sequence ID" value="NM_175619.3"/>
    <property type="RefSeq protein sequence ID" value="NP_783318.1"/>
</dbReference>
<dbReference type="UCSC" id="uc003gyd.4">
    <property type="organism name" value="human"/>
</dbReference>
<dbReference type="AGR" id="HGNC:20436"/>
<dbReference type="CTD" id="326340"/>
<dbReference type="DisGeNET" id="326340"/>
<dbReference type="GeneCards" id="ZAR1"/>
<dbReference type="HGNC" id="HGNC:20436">
    <property type="gene designation" value="ZAR1"/>
</dbReference>
<dbReference type="HPA" id="ENSG00000182223">
    <property type="expression patterns" value="Tissue enhanced (testis)"/>
</dbReference>
<dbReference type="MIM" id="607520">
    <property type="type" value="gene"/>
</dbReference>
<dbReference type="neXtProt" id="NX_Q86SH2"/>
<dbReference type="OpenTargets" id="ENSG00000182223"/>
<dbReference type="PharmGKB" id="PA134938240"/>
<dbReference type="VEuPathDB" id="HostDB:ENSG00000182223"/>
<dbReference type="eggNOG" id="ENOG502QWC9">
    <property type="taxonomic scope" value="Eukaryota"/>
</dbReference>
<dbReference type="GeneTree" id="ENSGT00390000012305"/>
<dbReference type="HOGENOM" id="CLU_053350_0_0_1"/>
<dbReference type="InParanoid" id="Q86SH2"/>
<dbReference type="OMA" id="CSCAVTQ"/>
<dbReference type="OrthoDB" id="9885288at2759"/>
<dbReference type="PAN-GO" id="Q86SH2">
    <property type="GO annotations" value="2 GO annotations based on evolutionary models"/>
</dbReference>
<dbReference type="PhylomeDB" id="Q86SH2"/>
<dbReference type="TreeFam" id="TF331383"/>
<dbReference type="PathwayCommons" id="Q86SH2"/>
<dbReference type="SignaLink" id="Q86SH2"/>
<dbReference type="BioGRID-ORCS" id="326340">
    <property type="hits" value="13 hits in 1142 CRISPR screens"/>
</dbReference>
<dbReference type="CD-CODE" id="51FB48F6">
    <property type="entry name" value="MARDO"/>
</dbReference>
<dbReference type="ChiTaRS" id="ZAR1">
    <property type="organism name" value="human"/>
</dbReference>
<dbReference type="GenomeRNAi" id="326340"/>
<dbReference type="Pharos" id="Q86SH2">
    <property type="development level" value="Tbio"/>
</dbReference>
<dbReference type="PRO" id="PR:Q86SH2"/>
<dbReference type="Proteomes" id="UP000005640">
    <property type="component" value="Chromosome 4"/>
</dbReference>
<dbReference type="RNAct" id="Q86SH2">
    <property type="molecule type" value="protein"/>
</dbReference>
<dbReference type="Bgee" id="ENSG00000182223">
    <property type="expression patterns" value="Expressed in secondary oocyte and 27 other cell types or tissues"/>
</dbReference>
<dbReference type="GO" id="GO:0005737">
    <property type="term" value="C:cytoplasm"/>
    <property type="evidence" value="ECO:0000250"/>
    <property type="project" value="UniProt"/>
</dbReference>
<dbReference type="GO" id="GO:0036464">
    <property type="term" value="C:cytoplasmic ribonucleoprotein granule"/>
    <property type="evidence" value="ECO:0007669"/>
    <property type="project" value="UniProtKB-SubCell"/>
</dbReference>
<dbReference type="GO" id="GO:0043232">
    <property type="term" value="C:intracellular membraneless organelle"/>
    <property type="evidence" value="ECO:0000250"/>
    <property type="project" value="UniProtKB"/>
</dbReference>
<dbReference type="GO" id="GO:0140693">
    <property type="term" value="F:molecular condensate scaffold activity"/>
    <property type="evidence" value="ECO:0000250"/>
    <property type="project" value="UniProtKB"/>
</dbReference>
<dbReference type="GO" id="GO:0003730">
    <property type="term" value="F:mRNA 3'-UTR binding"/>
    <property type="evidence" value="ECO:0000250"/>
    <property type="project" value="UniProtKB"/>
</dbReference>
<dbReference type="GO" id="GO:0140610">
    <property type="term" value="F:RNA sequestering activity"/>
    <property type="evidence" value="ECO:0000250"/>
    <property type="project" value="UniProtKB"/>
</dbReference>
<dbReference type="GO" id="GO:0008270">
    <property type="term" value="F:zinc ion binding"/>
    <property type="evidence" value="ECO:0007669"/>
    <property type="project" value="UniProtKB-KW"/>
</dbReference>
<dbReference type="GO" id="GO:0140694">
    <property type="term" value="P:membraneless organelle assembly"/>
    <property type="evidence" value="ECO:0000250"/>
    <property type="project" value="UniProtKB"/>
</dbReference>
<dbReference type="GO" id="GO:0048255">
    <property type="term" value="P:mRNA stabilization"/>
    <property type="evidence" value="ECO:0000250"/>
    <property type="project" value="UniProtKB"/>
</dbReference>
<dbReference type="GO" id="GO:0017148">
    <property type="term" value="P:negative regulation of translation"/>
    <property type="evidence" value="ECO:0000250"/>
    <property type="project" value="UniProtKB"/>
</dbReference>
<dbReference type="GO" id="GO:0001556">
    <property type="term" value="P:oocyte maturation"/>
    <property type="evidence" value="ECO:0000250"/>
    <property type="project" value="UniProtKB"/>
</dbReference>
<dbReference type="GO" id="GO:0006412">
    <property type="term" value="P:translation"/>
    <property type="evidence" value="ECO:0000318"/>
    <property type="project" value="GO_Central"/>
</dbReference>
<dbReference type="InterPro" id="IPR026775">
    <property type="entry name" value="Zar1"/>
</dbReference>
<dbReference type="InterPro" id="IPR027377">
    <property type="entry name" value="ZAR1/RTP1-5-like_Znf-3CxxC"/>
</dbReference>
<dbReference type="PANTHER" id="PTHR31054:SF6">
    <property type="entry name" value="ZYGOTE ARREST PROTEIN 1"/>
    <property type="match status" value="1"/>
</dbReference>
<dbReference type="PANTHER" id="PTHR31054">
    <property type="entry name" value="ZYGOTE ARREST PROTEIN 1-LIKE ISOFORM X1"/>
    <property type="match status" value="1"/>
</dbReference>
<dbReference type="Pfam" id="PF13695">
    <property type="entry name" value="Zn_ribbon_3CxxC"/>
    <property type="match status" value="1"/>
</dbReference>
<dbReference type="SMART" id="SM01328">
    <property type="entry name" value="zf-3CxxC"/>
    <property type="match status" value="1"/>
</dbReference>
<comment type="function">
    <text evidence="1">mRNA-binding protein that mediates formation of MARDO (mitochondria-associated ribonucleoprotein domain), a membraneless compartment that stores maternal mRNAs in oocytes. MARDO assembly around mitochondria is directed by an increase in mitochondrial membrane potential during oocyte growth. Promotes formation of MARDO phase-separated membraneless compartment by undergoing liquid-liquid phase separation upon binding to maternal mRNAs. Binds to the 3'-UTR of maternal mRNAs. Maternal mRNAs stored in the MARDO are translationally repressed. Essential for female fertility and oocyte-to-embryo transition by coordinating maternal mRNA storage, translation and degradation.</text>
</comment>
<comment type="subunit">
    <text evidence="1">Interacts with YBX2.</text>
</comment>
<comment type="interaction">
    <interactant intactId="EBI-18679381">
        <id>Q86SH2</id>
    </interactant>
    <interactant intactId="EBI-742371">
        <id>Q96FJ2</id>
        <label>DYNLL2</label>
    </interactant>
    <organismsDiffer>false</organismsDiffer>
    <experiments>3</experiments>
</comment>
<comment type="subcellular location">
    <subcellularLocation>
        <location evidence="1">Cytoplasm</location>
        <location evidence="1">Cytoplasmic ribonucleoprotein granule</location>
    </subcellularLocation>
    <subcellularLocation>
        <location evidence="1">Cytoplasm</location>
    </subcellularLocation>
    <text evidence="1">Specifically localizes to MARDO (mitochondria-associated ribonucleoprotein domain), a mitochondria-associated membraneless compartment that stores mRNAs in oocytes.</text>
</comment>
<comment type="tissue specificity">
    <text evidence="4">Ovary and testis.</text>
</comment>
<comment type="domain">
    <text evidence="1">Disordered region at the N-terminus undergoes liquid-liquid phase separation (LLPS) for the formation of MARDO (mitochondria-associated ribonucleoprotein domain), a membraneless compartment that stores maternal mRNAs in oocytes.</text>
</comment>
<comment type="domain">
    <text evidence="1">The 3CxxC-type mediates binding to the 3'-UTR of mRNAs.</text>
</comment>
<comment type="PTM">
    <text evidence="1">Ubiquitinated and degradaded by the proteasome during oocyte meiotic maturation, leading to MARDO (mitochondria-associated ribonucleoprotein domain) membraneless compartment dissolution.</text>
</comment>
<comment type="similarity">
    <text evidence="6">Belongs to the ZAR1 family.</text>
</comment>
<comment type="online information" name="Protein Spotlight">
    <link uri="https://www.proteinspotlight.org/back_issues/261/"/>
    <text>In good time - Issue 261 of September 2023</text>
</comment>
<organism>
    <name type="scientific">Homo sapiens</name>
    <name type="common">Human</name>
    <dbReference type="NCBI Taxonomy" id="9606"/>
    <lineage>
        <taxon>Eukaryota</taxon>
        <taxon>Metazoa</taxon>
        <taxon>Chordata</taxon>
        <taxon>Craniata</taxon>
        <taxon>Vertebrata</taxon>
        <taxon>Euteleostomi</taxon>
        <taxon>Mammalia</taxon>
        <taxon>Eutheria</taxon>
        <taxon>Euarchontoglires</taxon>
        <taxon>Primates</taxon>
        <taxon>Haplorrhini</taxon>
        <taxon>Catarrhini</taxon>
        <taxon>Hominidae</taxon>
        <taxon>Homo</taxon>
    </lineage>
</organism>
<accession>Q86SH2</accession>
<name>ZAR1_HUMAN</name>